<sequence>MSRITTSLDHYEVWFLTGSQNLYGEETLQQVAEQSQEIARQLEEASDIPVRVVWKPVLKDSDSIRRMALEANASDRTIGLIAWMHTFSPAKMWIQGLDALQKPFLHLHTQANVALPWSSIDMDFMNLNQAAHGDREFGYIQSRLGVVRKTVVGHVSTESVRDSIGTWMRAAAGWAAVHELKVARFGDNMRNVAVTEGDKTEAELKFGVSVNTWGVNDLVERVDAATDAEIDALVDEYERLYDIAPELQRGGERHESLRYGAAIEVGLRSFLEEGGFGAFTTSFEDLGGLRQLPGLAVQRLMAEGYGFGAEGDWKTAVLIRAAKVMGSGLPGGASLMEDYTYHLVPGEEKILGAHMLEICPTLTTGRPSLEIHPLGIGGREDPVRLVFDTDPGPAVVVAMSDMRERFRIVANVVEVVPLDEPLPNLPVARAVWKPAPDLATSAAAWLTAGAAHHTVMSTQVGVEVFEDFAEIARTELLVIDEDTTLKGFTKEVRWNQAYHRLAQGL</sequence>
<reference key="1">
    <citation type="journal article" date="2008" name="J. Bacteriol.">
        <title>Genome of the actinomycete plant pathogen Clavibacter michiganensis subsp. sepedonicus suggests recent niche adaptation.</title>
        <authorList>
            <person name="Bentley S.D."/>
            <person name="Corton C."/>
            <person name="Brown S.E."/>
            <person name="Barron A."/>
            <person name="Clark L."/>
            <person name="Doggett J."/>
            <person name="Harris B."/>
            <person name="Ormond D."/>
            <person name="Quail M.A."/>
            <person name="May G."/>
            <person name="Francis D."/>
            <person name="Knudson D."/>
            <person name="Parkhill J."/>
            <person name="Ishimaru C.A."/>
        </authorList>
    </citation>
    <scope>NUCLEOTIDE SEQUENCE [LARGE SCALE GENOMIC DNA]</scope>
    <source>
        <strain>ATCC 33113 / DSM 20744 / JCM 9667 / LMG 2889 / ICMP 2535 / C-1</strain>
    </source>
</reference>
<accession>B0RIE3</accession>
<keyword id="KW-0054">Arabinose catabolism</keyword>
<keyword id="KW-0119">Carbohydrate metabolism</keyword>
<keyword id="KW-0413">Isomerase</keyword>
<keyword id="KW-0464">Manganese</keyword>
<keyword id="KW-0479">Metal-binding</keyword>
<feature type="chain" id="PRO_1000081674" description="L-arabinose isomerase">
    <location>
        <begin position="1"/>
        <end position="505"/>
    </location>
</feature>
<feature type="binding site" evidence="1">
    <location>
        <position position="310"/>
    </location>
    <ligand>
        <name>Mn(2+)</name>
        <dbReference type="ChEBI" id="CHEBI:29035"/>
    </ligand>
</feature>
<feature type="binding site" evidence="1">
    <location>
        <position position="337"/>
    </location>
    <ligand>
        <name>Mn(2+)</name>
        <dbReference type="ChEBI" id="CHEBI:29035"/>
    </ligand>
</feature>
<feature type="binding site" evidence="1">
    <location>
        <position position="354"/>
    </location>
    <ligand>
        <name>Mn(2+)</name>
        <dbReference type="ChEBI" id="CHEBI:29035"/>
    </ligand>
</feature>
<feature type="binding site" evidence="1">
    <location>
        <position position="453"/>
    </location>
    <ligand>
        <name>Mn(2+)</name>
        <dbReference type="ChEBI" id="CHEBI:29035"/>
    </ligand>
</feature>
<name>ARAA_CLASE</name>
<protein>
    <recommendedName>
        <fullName evidence="1">L-arabinose isomerase</fullName>
        <ecNumber evidence="1">5.3.1.4</ecNumber>
    </recommendedName>
</protein>
<evidence type="ECO:0000255" key="1">
    <source>
        <dbReference type="HAMAP-Rule" id="MF_00519"/>
    </source>
</evidence>
<dbReference type="EC" id="5.3.1.4" evidence="1"/>
<dbReference type="EMBL" id="AM849034">
    <property type="protein sequence ID" value="CAQ00257.1"/>
    <property type="molecule type" value="Genomic_DNA"/>
</dbReference>
<dbReference type="RefSeq" id="WP_012297615.1">
    <property type="nucleotide sequence ID" value="NZ_MZMN01000003.1"/>
</dbReference>
<dbReference type="SMR" id="B0RIE3"/>
<dbReference type="STRING" id="31964.CMS0133"/>
<dbReference type="KEGG" id="cms:CMS0133"/>
<dbReference type="eggNOG" id="COG2160">
    <property type="taxonomic scope" value="Bacteria"/>
</dbReference>
<dbReference type="HOGENOM" id="CLU_045663_0_0_11"/>
<dbReference type="OrthoDB" id="9765600at2"/>
<dbReference type="UniPathway" id="UPA00145">
    <property type="reaction ID" value="UER00565"/>
</dbReference>
<dbReference type="Proteomes" id="UP000001318">
    <property type="component" value="Chromosome"/>
</dbReference>
<dbReference type="GO" id="GO:0005829">
    <property type="term" value="C:cytosol"/>
    <property type="evidence" value="ECO:0007669"/>
    <property type="project" value="TreeGrafter"/>
</dbReference>
<dbReference type="GO" id="GO:0008733">
    <property type="term" value="F:L-arabinose isomerase activity"/>
    <property type="evidence" value="ECO:0007669"/>
    <property type="project" value="UniProtKB-UniRule"/>
</dbReference>
<dbReference type="GO" id="GO:0030145">
    <property type="term" value="F:manganese ion binding"/>
    <property type="evidence" value="ECO:0007669"/>
    <property type="project" value="UniProtKB-UniRule"/>
</dbReference>
<dbReference type="GO" id="GO:0019569">
    <property type="term" value="P:L-arabinose catabolic process to xylulose 5-phosphate"/>
    <property type="evidence" value="ECO:0007669"/>
    <property type="project" value="UniProtKB-UniRule"/>
</dbReference>
<dbReference type="CDD" id="cd03557">
    <property type="entry name" value="L-arabinose_isomerase"/>
    <property type="match status" value="1"/>
</dbReference>
<dbReference type="Gene3D" id="3.40.50.10940">
    <property type="match status" value="1"/>
</dbReference>
<dbReference type="HAMAP" id="MF_00519">
    <property type="entry name" value="Arabinose_Isome"/>
    <property type="match status" value="1"/>
</dbReference>
<dbReference type="InterPro" id="IPR024664">
    <property type="entry name" value="Ara_Isoase_C"/>
</dbReference>
<dbReference type="InterPro" id="IPR055390">
    <property type="entry name" value="AraA_central"/>
</dbReference>
<dbReference type="InterPro" id="IPR055389">
    <property type="entry name" value="AraA_N"/>
</dbReference>
<dbReference type="InterPro" id="IPR038583">
    <property type="entry name" value="AraA_N_sf"/>
</dbReference>
<dbReference type="InterPro" id="IPR004216">
    <property type="entry name" value="Fuc/Ara_isomerase_C"/>
</dbReference>
<dbReference type="InterPro" id="IPR009015">
    <property type="entry name" value="Fucose_isomerase_N/cen_sf"/>
</dbReference>
<dbReference type="InterPro" id="IPR003762">
    <property type="entry name" value="Lara_isomerase"/>
</dbReference>
<dbReference type="NCBIfam" id="NF002795">
    <property type="entry name" value="PRK02929.1"/>
    <property type="match status" value="1"/>
</dbReference>
<dbReference type="PANTHER" id="PTHR38464">
    <property type="entry name" value="L-ARABINOSE ISOMERASE"/>
    <property type="match status" value="1"/>
</dbReference>
<dbReference type="PANTHER" id="PTHR38464:SF1">
    <property type="entry name" value="L-ARABINOSE ISOMERASE"/>
    <property type="match status" value="1"/>
</dbReference>
<dbReference type="Pfam" id="PF24856">
    <property type="entry name" value="AraA_central"/>
    <property type="match status" value="1"/>
</dbReference>
<dbReference type="Pfam" id="PF02610">
    <property type="entry name" value="AraA_N"/>
    <property type="match status" value="1"/>
</dbReference>
<dbReference type="Pfam" id="PF11762">
    <property type="entry name" value="Arabinose_Iso_C"/>
    <property type="match status" value="1"/>
</dbReference>
<dbReference type="PIRSF" id="PIRSF001478">
    <property type="entry name" value="L-ara_isomerase"/>
    <property type="match status" value="1"/>
</dbReference>
<dbReference type="SUPFAM" id="SSF50443">
    <property type="entry name" value="FucI/AraA C-terminal domain-like"/>
    <property type="match status" value="1"/>
</dbReference>
<dbReference type="SUPFAM" id="SSF53743">
    <property type="entry name" value="FucI/AraA N-terminal and middle domains"/>
    <property type="match status" value="1"/>
</dbReference>
<proteinExistence type="inferred from homology"/>
<organism>
    <name type="scientific">Clavibacter sepedonicus</name>
    <name type="common">Clavibacter michiganensis subsp. sepedonicus</name>
    <dbReference type="NCBI Taxonomy" id="31964"/>
    <lineage>
        <taxon>Bacteria</taxon>
        <taxon>Bacillati</taxon>
        <taxon>Actinomycetota</taxon>
        <taxon>Actinomycetes</taxon>
        <taxon>Micrococcales</taxon>
        <taxon>Microbacteriaceae</taxon>
        <taxon>Clavibacter</taxon>
    </lineage>
</organism>
<gene>
    <name evidence="1" type="primary">araA</name>
    <name type="ordered locus">CMS0133</name>
</gene>
<comment type="function">
    <text evidence="1">Catalyzes the conversion of L-arabinose to L-ribulose.</text>
</comment>
<comment type="catalytic activity">
    <reaction evidence="1">
        <text>beta-L-arabinopyranose = L-ribulose</text>
        <dbReference type="Rhea" id="RHEA:14821"/>
        <dbReference type="ChEBI" id="CHEBI:16880"/>
        <dbReference type="ChEBI" id="CHEBI:40886"/>
        <dbReference type="EC" id="5.3.1.4"/>
    </reaction>
</comment>
<comment type="cofactor">
    <cofactor evidence="1">
        <name>Mn(2+)</name>
        <dbReference type="ChEBI" id="CHEBI:29035"/>
    </cofactor>
    <text evidence="1">Binds 1 Mn(2+) ion per subunit.</text>
</comment>
<comment type="pathway">
    <text evidence="1">Carbohydrate degradation; L-arabinose degradation via L-ribulose; D-xylulose 5-phosphate from L-arabinose (bacterial route): step 1/3.</text>
</comment>
<comment type="similarity">
    <text evidence="1">Belongs to the arabinose isomerase family.</text>
</comment>